<organism>
    <name type="scientific">Iris hollandica</name>
    <name type="common">Dutch iris</name>
    <name type="synonym">Iris tingitana x Iris xiphium</name>
    <dbReference type="NCBI Taxonomy" id="35876"/>
    <lineage>
        <taxon>Eukaryota</taxon>
        <taxon>Viridiplantae</taxon>
        <taxon>Streptophyta</taxon>
        <taxon>Embryophyta</taxon>
        <taxon>Tracheophyta</taxon>
        <taxon>Spermatophyta</taxon>
        <taxon>Magnoliopsida</taxon>
        <taxon>Liliopsida</taxon>
        <taxon>Asparagales</taxon>
        <taxon>Iridaceae</taxon>
        <taxon>Iridoideae</taxon>
        <taxon>Irideae</taxon>
        <taxon>Iris</taxon>
    </lineage>
</organism>
<name>LECA_IRIHO</name>
<sequence length="28" mass="3270">YDKVEFHITGXTKDTYSAFIQSLRTHLS</sequence>
<feature type="chain" id="PRO_0000221422" description="N-acetyl-D-galactosamine-binding lectin subunit A">
    <location>
        <begin position="1"/>
        <end position="28" status="greater than"/>
    </location>
</feature>
<feature type="non-terminal residue">
    <location>
        <position position="28"/>
    </location>
</feature>
<dbReference type="EC" id="3.2.2.22"/>
<dbReference type="GO" id="GO:0030246">
    <property type="term" value="F:carbohydrate binding"/>
    <property type="evidence" value="ECO:0007669"/>
    <property type="project" value="UniProtKB-KW"/>
</dbReference>
<dbReference type="GO" id="GO:0030598">
    <property type="term" value="F:rRNA N-glycosylase activity"/>
    <property type="evidence" value="ECO:0007669"/>
    <property type="project" value="UniProtKB-EC"/>
</dbReference>
<dbReference type="GO" id="GO:0090729">
    <property type="term" value="F:toxin activity"/>
    <property type="evidence" value="ECO:0007669"/>
    <property type="project" value="UniProtKB-KW"/>
</dbReference>
<dbReference type="GO" id="GO:0017148">
    <property type="term" value="P:negative regulation of translation"/>
    <property type="evidence" value="ECO:0007669"/>
    <property type="project" value="UniProtKB-KW"/>
</dbReference>
<dbReference type="InterPro" id="IPR036041">
    <property type="entry name" value="Ribosome-inact_prot_sf"/>
</dbReference>
<dbReference type="SUPFAM" id="SSF56371">
    <property type="entry name" value="Ribosome inactivating proteins (RIP)"/>
    <property type="match status" value="1"/>
</dbReference>
<comment type="function">
    <text>Gal / GalNAc-specific lectin. Agglutinates both native and trypsin-treated rabbit erythrocytes but not human erythrocytes irrespective of blood group type.</text>
</comment>
<comment type="catalytic activity">
    <reaction>
        <text>Endohydrolysis of the N-glycosidic bond at one specific adenosine on the 28S rRNA.</text>
        <dbReference type="EC" id="3.2.2.22"/>
    </reaction>
</comment>
<comment type="subunit">
    <text>Disulfide-linked heterodimer of A and B chains.</text>
</comment>
<comment type="similarity">
    <text evidence="1">Belongs to the ribosome-inactivating protein family.</text>
</comment>
<reference key="1">
    <citation type="journal article" date="1994" name="J. Biol. Chem.">
        <title>Isolation and characterization of an N-acetyl-D-galactosamine-binding lectin from Dutch Iris bulbs which recognizes the blood group A disaccharide (GalNAc alpha 1-3Gal).</title>
        <authorList>
            <person name="Mo H."/>
            <person name="van Damme E.J.M."/>
            <person name="Peumans W.J."/>
            <person name="Goldstein I.J."/>
        </authorList>
    </citation>
    <scope>PROTEIN SEQUENCE</scope>
    <source>
        <strain>cv. Golden Harvest</strain>
        <strain>cv. Prof. Blaauw</strain>
        <tissue>Bulb</tissue>
    </source>
</reference>
<protein>
    <recommendedName>
        <fullName>N-acetyl-D-galactosamine-binding lectin subunit A</fullName>
        <ecNumber>3.2.2.22</ecNumber>
    </recommendedName>
    <alternativeName>
        <fullName>A-disaccharide-binding lectin subunit A</fullName>
    </alternativeName>
    <alternativeName>
        <fullName>rRNA N-glycosidase</fullName>
    </alternativeName>
</protein>
<keyword id="KW-0903">Direct protein sequencing</keyword>
<keyword id="KW-1015">Disulfide bond</keyword>
<keyword id="KW-0378">Hydrolase</keyword>
<keyword id="KW-0430">Lectin</keyword>
<keyword id="KW-0652">Protein synthesis inhibitor</keyword>
<keyword id="KW-0800">Toxin</keyword>
<evidence type="ECO:0000305" key="1"/>
<accession>P36230</accession>
<proteinExistence type="evidence at protein level"/>